<proteinExistence type="inferred from homology"/>
<organism>
    <name type="scientific">Burkholderia cenocepacia (strain HI2424)</name>
    <dbReference type="NCBI Taxonomy" id="331272"/>
    <lineage>
        <taxon>Bacteria</taxon>
        <taxon>Pseudomonadati</taxon>
        <taxon>Pseudomonadota</taxon>
        <taxon>Betaproteobacteria</taxon>
        <taxon>Burkholderiales</taxon>
        <taxon>Burkholderiaceae</taxon>
        <taxon>Burkholderia</taxon>
        <taxon>Burkholderia cepacia complex</taxon>
    </lineage>
</organism>
<evidence type="ECO:0000255" key="1">
    <source>
        <dbReference type="HAMAP-Rule" id="MF_01721"/>
    </source>
</evidence>
<evidence type="ECO:0000256" key="2">
    <source>
        <dbReference type="SAM" id="MobiDB-lite"/>
    </source>
</evidence>
<keyword id="KW-0067">ATP-binding</keyword>
<keyword id="KW-0997">Cell inner membrane</keyword>
<keyword id="KW-1003">Cell membrane</keyword>
<keyword id="KW-0472">Membrane</keyword>
<keyword id="KW-0547">Nucleotide-binding</keyword>
<keyword id="KW-0677">Repeat</keyword>
<keyword id="KW-0762">Sugar transport</keyword>
<keyword id="KW-1278">Translocase</keyword>
<keyword id="KW-0813">Transport</keyword>
<sequence>MTMQTMTAASGHDAEAGTPPDGPLLALDGITVTFPGVRALDAVSLSVRAGEVHGLMGENGAGKSTLLKVLSGVNQPQAGTLTLNGTAQRFASTRAALEAGIAIIYQELHLVPELTVAENLMLGQLPSRLGVVDERTLAARALDALERLGEHIDPGIPVKYLSIGQRQMIEIGKALMRHARVIAFDEPTSSLSARETTQLFRIIRALRAEGRAIIYVTHRMEEVYELCDRVTVFRDGRRIDTFDSVADLDRDRLIGCMVGRSIEDVYGYRSRPAGDVLIEAKGLAGPGLAEPVSFTARRGEIVGFFGLVGAGRSELMKLLYGAVRPSAGHVELNGKRVAFGSPRDAVRAGIALCPEDRKQEGIVAIASVADNLNISARRHFSPARVLLDGRRERELAQKYIERLAIKTRDGDTPIGALSGGNQQKVVLARWLAERIDVFLMDEPTRGIDVGARAEIYNLFYELAEAGRTVILVSSDLAEVIGVSDRIVVMKEGRIAGEVAKAHATPDALIKLALPR</sequence>
<reference key="1">
    <citation type="submission" date="2006-08" db="EMBL/GenBank/DDBJ databases">
        <title>Complete sequence of chromosome 2 of Burkholderia cenocepacia HI2424.</title>
        <authorList>
            <person name="Copeland A."/>
            <person name="Lucas S."/>
            <person name="Lapidus A."/>
            <person name="Barry K."/>
            <person name="Detter J.C."/>
            <person name="Glavina del Rio T."/>
            <person name="Hammon N."/>
            <person name="Israni S."/>
            <person name="Pitluck S."/>
            <person name="Chain P."/>
            <person name="Malfatti S."/>
            <person name="Shin M."/>
            <person name="Vergez L."/>
            <person name="Schmutz J."/>
            <person name="Larimer F."/>
            <person name="Land M."/>
            <person name="Hauser L."/>
            <person name="Kyrpides N."/>
            <person name="Kim E."/>
            <person name="LiPuma J.J."/>
            <person name="Gonzalez C.F."/>
            <person name="Konstantinidis K."/>
            <person name="Tiedje J.M."/>
            <person name="Richardson P."/>
        </authorList>
    </citation>
    <scope>NUCLEOTIDE SEQUENCE [LARGE SCALE GENOMIC DNA]</scope>
    <source>
        <strain>HI2424</strain>
    </source>
</reference>
<gene>
    <name evidence="1" type="primary">araG2</name>
    <name type="ordered locus">Bcen2424_5640</name>
</gene>
<feature type="chain" id="PRO_0000277698" description="Arabinose import ATP-binding protein AraG 2">
    <location>
        <begin position="1"/>
        <end position="515"/>
    </location>
</feature>
<feature type="domain" description="ABC transporter 1" evidence="1">
    <location>
        <begin position="25"/>
        <end position="260"/>
    </location>
</feature>
<feature type="domain" description="ABC transporter 2" evidence="1">
    <location>
        <begin position="260"/>
        <end position="511"/>
    </location>
</feature>
<feature type="region of interest" description="Disordered" evidence="2">
    <location>
        <begin position="1"/>
        <end position="22"/>
    </location>
</feature>
<feature type="binding site" evidence="1">
    <location>
        <begin position="57"/>
        <end position="64"/>
    </location>
    <ligand>
        <name>ATP</name>
        <dbReference type="ChEBI" id="CHEBI:30616"/>
    </ligand>
</feature>
<protein>
    <recommendedName>
        <fullName evidence="1">Arabinose import ATP-binding protein AraG 2</fullName>
        <ecNumber evidence="1">7.5.2.12</ecNumber>
    </recommendedName>
</protein>
<name>ARAG2_BURCH</name>
<dbReference type="EC" id="7.5.2.12" evidence="1"/>
<dbReference type="EMBL" id="CP000459">
    <property type="protein sequence ID" value="ABK12373.1"/>
    <property type="molecule type" value="Genomic_DNA"/>
</dbReference>
<dbReference type="SMR" id="A0B3Z7"/>
<dbReference type="KEGG" id="bch:Bcen2424_5640"/>
<dbReference type="HOGENOM" id="CLU_000604_92_3_4"/>
<dbReference type="GO" id="GO:0005886">
    <property type="term" value="C:plasma membrane"/>
    <property type="evidence" value="ECO:0007669"/>
    <property type="project" value="UniProtKB-SubCell"/>
</dbReference>
<dbReference type="GO" id="GO:0015612">
    <property type="term" value="F:ABC-type L-arabinose transporter activity"/>
    <property type="evidence" value="ECO:0007669"/>
    <property type="project" value="UniProtKB-EC"/>
</dbReference>
<dbReference type="GO" id="GO:0005524">
    <property type="term" value="F:ATP binding"/>
    <property type="evidence" value="ECO:0007669"/>
    <property type="project" value="UniProtKB-KW"/>
</dbReference>
<dbReference type="GO" id="GO:0016887">
    <property type="term" value="F:ATP hydrolysis activity"/>
    <property type="evidence" value="ECO:0007669"/>
    <property type="project" value="InterPro"/>
</dbReference>
<dbReference type="CDD" id="cd03216">
    <property type="entry name" value="ABC_Carb_Monos_I"/>
    <property type="match status" value="1"/>
</dbReference>
<dbReference type="CDD" id="cd03215">
    <property type="entry name" value="ABC_Carb_Monos_II"/>
    <property type="match status" value="1"/>
</dbReference>
<dbReference type="FunFam" id="3.40.50.300:FF:000126">
    <property type="entry name" value="Galactose/methyl galactoside import ATP-binding protein MglA"/>
    <property type="match status" value="1"/>
</dbReference>
<dbReference type="FunFam" id="3.40.50.300:FF:000127">
    <property type="entry name" value="Ribose import ATP-binding protein RbsA"/>
    <property type="match status" value="1"/>
</dbReference>
<dbReference type="Gene3D" id="3.40.50.300">
    <property type="entry name" value="P-loop containing nucleotide triphosphate hydrolases"/>
    <property type="match status" value="2"/>
</dbReference>
<dbReference type="InterPro" id="IPR003593">
    <property type="entry name" value="AAA+_ATPase"/>
</dbReference>
<dbReference type="InterPro" id="IPR050107">
    <property type="entry name" value="ABC_carbohydrate_import_ATPase"/>
</dbReference>
<dbReference type="InterPro" id="IPR003439">
    <property type="entry name" value="ABC_transporter-like_ATP-bd"/>
</dbReference>
<dbReference type="InterPro" id="IPR017871">
    <property type="entry name" value="ABC_transporter-like_CS"/>
</dbReference>
<dbReference type="InterPro" id="IPR027417">
    <property type="entry name" value="P-loop_NTPase"/>
</dbReference>
<dbReference type="NCBIfam" id="NF008442">
    <property type="entry name" value="PRK11288.1"/>
    <property type="match status" value="1"/>
</dbReference>
<dbReference type="PANTHER" id="PTHR43790:SF6">
    <property type="entry name" value="ARABINOSE IMPORT ATP-BINDING PROTEIN ARAG"/>
    <property type="match status" value="1"/>
</dbReference>
<dbReference type="PANTHER" id="PTHR43790">
    <property type="entry name" value="CARBOHYDRATE TRANSPORT ATP-BINDING PROTEIN MG119-RELATED"/>
    <property type="match status" value="1"/>
</dbReference>
<dbReference type="Pfam" id="PF00005">
    <property type="entry name" value="ABC_tran"/>
    <property type="match status" value="2"/>
</dbReference>
<dbReference type="SMART" id="SM00382">
    <property type="entry name" value="AAA"/>
    <property type="match status" value="2"/>
</dbReference>
<dbReference type="SUPFAM" id="SSF52540">
    <property type="entry name" value="P-loop containing nucleoside triphosphate hydrolases"/>
    <property type="match status" value="2"/>
</dbReference>
<dbReference type="PROSITE" id="PS00211">
    <property type="entry name" value="ABC_TRANSPORTER_1"/>
    <property type="match status" value="1"/>
</dbReference>
<dbReference type="PROSITE" id="PS50893">
    <property type="entry name" value="ABC_TRANSPORTER_2"/>
    <property type="match status" value="2"/>
</dbReference>
<dbReference type="PROSITE" id="PS51268">
    <property type="entry name" value="ARAG"/>
    <property type="match status" value="1"/>
</dbReference>
<accession>A0B3Z7</accession>
<comment type="function">
    <text evidence="1">Part of the ABC transporter complex AraFGH involved in arabinose import. Responsible for energy coupling to the transport system.</text>
</comment>
<comment type="catalytic activity">
    <reaction evidence="1">
        <text>L-arabinose(out) + ATP + H2O = L-arabinose(in) + ADP + phosphate + H(+)</text>
        <dbReference type="Rhea" id="RHEA:30007"/>
        <dbReference type="ChEBI" id="CHEBI:15377"/>
        <dbReference type="ChEBI" id="CHEBI:15378"/>
        <dbReference type="ChEBI" id="CHEBI:17535"/>
        <dbReference type="ChEBI" id="CHEBI:30616"/>
        <dbReference type="ChEBI" id="CHEBI:43474"/>
        <dbReference type="ChEBI" id="CHEBI:456216"/>
        <dbReference type="EC" id="7.5.2.12"/>
    </reaction>
</comment>
<comment type="subunit">
    <text evidence="1">The complex is composed of two ATP-binding proteins (AraG), two transmembrane proteins (AraH) and a solute-binding protein (AraF).</text>
</comment>
<comment type="subcellular location">
    <subcellularLocation>
        <location evidence="1">Cell inner membrane</location>
        <topology evidence="1">Peripheral membrane protein</topology>
    </subcellularLocation>
</comment>
<comment type="similarity">
    <text evidence="1">Belongs to the ABC transporter superfamily. Arabinose importer (TC 3.A.1.2.2) family.</text>
</comment>